<gene>
    <name evidence="1" type="primary">hemA</name>
    <name type="ordered locus">Shew185_3615</name>
</gene>
<keyword id="KW-0521">NADP</keyword>
<keyword id="KW-0560">Oxidoreductase</keyword>
<keyword id="KW-0627">Porphyrin biosynthesis</keyword>
<proteinExistence type="inferred from homology"/>
<accession>A6WSF1</accession>
<organism>
    <name type="scientific">Shewanella baltica (strain OS185)</name>
    <dbReference type="NCBI Taxonomy" id="402882"/>
    <lineage>
        <taxon>Bacteria</taxon>
        <taxon>Pseudomonadati</taxon>
        <taxon>Pseudomonadota</taxon>
        <taxon>Gammaproteobacteria</taxon>
        <taxon>Alteromonadales</taxon>
        <taxon>Shewanellaceae</taxon>
        <taxon>Shewanella</taxon>
    </lineage>
</organism>
<sequence length="416" mass="45467">MSLVAIGINHKTATVDLREKVAFSPDKIHDAMKSLASRTRSGEAVIVSTCNRTELYCNNGDEADIIAWLEEYHGLDHKDVAPCLYNYHGQDAVRHLMRVASGLDSLILGEPQILGQVKQAFVKAKEAGTVALTIDRLFQNTFSVAKKVRTDTEIGAAAVSVAFAAVSMAKHIFSSISTTKVLLIGAGETIELVAKHLKDNGVASMVVANRTLERAQGMCEEFGATAITLAQIPDYLPKADIVISSTASPLPILGKGMVEKALKQRRHQPMLLVDIAVPRDIEPEVADLDDAFLYTVDDLHSIIEQNMASRKEAAEQAEVITEEQSFLFMDWIRSLESVDSIREYRSQSMAVKDELVERALNKLAQGSDTEQVLIELANRLTNKLIHAPTQALTAASRQGDLNTLGQLRSALGLDKH</sequence>
<protein>
    <recommendedName>
        <fullName evidence="1">Glutamyl-tRNA reductase</fullName>
        <shortName evidence="1">GluTR</shortName>
        <ecNumber evidence="1">1.2.1.70</ecNumber>
    </recommendedName>
</protein>
<dbReference type="EC" id="1.2.1.70" evidence="1"/>
<dbReference type="EMBL" id="CP000753">
    <property type="protein sequence ID" value="ABS09740.1"/>
    <property type="molecule type" value="Genomic_DNA"/>
</dbReference>
<dbReference type="RefSeq" id="WP_012090153.1">
    <property type="nucleotide sequence ID" value="NC_009665.1"/>
</dbReference>
<dbReference type="SMR" id="A6WSF1"/>
<dbReference type="KEGG" id="sbm:Shew185_3615"/>
<dbReference type="HOGENOM" id="CLU_035113_2_2_6"/>
<dbReference type="UniPathway" id="UPA00251">
    <property type="reaction ID" value="UER00316"/>
</dbReference>
<dbReference type="GO" id="GO:0008883">
    <property type="term" value="F:glutamyl-tRNA reductase activity"/>
    <property type="evidence" value="ECO:0007669"/>
    <property type="project" value="UniProtKB-UniRule"/>
</dbReference>
<dbReference type="GO" id="GO:0050661">
    <property type="term" value="F:NADP binding"/>
    <property type="evidence" value="ECO:0007669"/>
    <property type="project" value="InterPro"/>
</dbReference>
<dbReference type="GO" id="GO:0019353">
    <property type="term" value="P:protoporphyrinogen IX biosynthetic process from glutamate"/>
    <property type="evidence" value="ECO:0007669"/>
    <property type="project" value="TreeGrafter"/>
</dbReference>
<dbReference type="CDD" id="cd05213">
    <property type="entry name" value="NAD_bind_Glutamyl_tRNA_reduct"/>
    <property type="match status" value="1"/>
</dbReference>
<dbReference type="FunFam" id="3.30.460.30:FF:000001">
    <property type="entry name" value="Glutamyl-tRNA reductase"/>
    <property type="match status" value="1"/>
</dbReference>
<dbReference type="FunFam" id="3.40.50.720:FF:000031">
    <property type="entry name" value="Glutamyl-tRNA reductase"/>
    <property type="match status" value="1"/>
</dbReference>
<dbReference type="Gene3D" id="3.30.460.30">
    <property type="entry name" value="Glutamyl-tRNA reductase, N-terminal domain"/>
    <property type="match status" value="1"/>
</dbReference>
<dbReference type="Gene3D" id="3.40.50.720">
    <property type="entry name" value="NAD(P)-binding Rossmann-like Domain"/>
    <property type="match status" value="1"/>
</dbReference>
<dbReference type="HAMAP" id="MF_00087">
    <property type="entry name" value="Glu_tRNA_reductase"/>
    <property type="match status" value="1"/>
</dbReference>
<dbReference type="InterPro" id="IPR000343">
    <property type="entry name" value="4pyrrol_synth_GluRdtase"/>
</dbReference>
<dbReference type="InterPro" id="IPR015896">
    <property type="entry name" value="4pyrrol_synth_GluRdtase_dimer"/>
</dbReference>
<dbReference type="InterPro" id="IPR015895">
    <property type="entry name" value="4pyrrol_synth_GluRdtase_N"/>
</dbReference>
<dbReference type="InterPro" id="IPR018214">
    <property type="entry name" value="GluRdtase_CS"/>
</dbReference>
<dbReference type="InterPro" id="IPR036453">
    <property type="entry name" value="GluRdtase_dimer_dom_sf"/>
</dbReference>
<dbReference type="InterPro" id="IPR036343">
    <property type="entry name" value="GluRdtase_N_sf"/>
</dbReference>
<dbReference type="InterPro" id="IPR036291">
    <property type="entry name" value="NAD(P)-bd_dom_sf"/>
</dbReference>
<dbReference type="InterPro" id="IPR006151">
    <property type="entry name" value="Shikm_DH/Glu-tRNA_Rdtase"/>
</dbReference>
<dbReference type="NCBIfam" id="TIGR01035">
    <property type="entry name" value="hemA"/>
    <property type="match status" value="1"/>
</dbReference>
<dbReference type="PANTHER" id="PTHR43013">
    <property type="entry name" value="GLUTAMYL-TRNA REDUCTASE"/>
    <property type="match status" value="1"/>
</dbReference>
<dbReference type="PANTHER" id="PTHR43013:SF1">
    <property type="entry name" value="GLUTAMYL-TRNA REDUCTASE"/>
    <property type="match status" value="1"/>
</dbReference>
<dbReference type="Pfam" id="PF00745">
    <property type="entry name" value="GlutR_dimer"/>
    <property type="match status" value="1"/>
</dbReference>
<dbReference type="Pfam" id="PF05201">
    <property type="entry name" value="GlutR_N"/>
    <property type="match status" value="1"/>
</dbReference>
<dbReference type="Pfam" id="PF01488">
    <property type="entry name" value="Shikimate_DH"/>
    <property type="match status" value="1"/>
</dbReference>
<dbReference type="PIRSF" id="PIRSF000445">
    <property type="entry name" value="4pyrrol_synth_GluRdtase"/>
    <property type="match status" value="1"/>
</dbReference>
<dbReference type="SUPFAM" id="SSF69742">
    <property type="entry name" value="Glutamyl tRNA-reductase catalytic, N-terminal domain"/>
    <property type="match status" value="1"/>
</dbReference>
<dbReference type="SUPFAM" id="SSF69075">
    <property type="entry name" value="Glutamyl tRNA-reductase dimerization domain"/>
    <property type="match status" value="1"/>
</dbReference>
<dbReference type="SUPFAM" id="SSF51735">
    <property type="entry name" value="NAD(P)-binding Rossmann-fold domains"/>
    <property type="match status" value="1"/>
</dbReference>
<dbReference type="PROSITE" id="PS00747">
    <property type="entry name" value="GLUTR"/>
    <property type="match status" value="1"/>
</dbReference>
<comment type="function">
    <text evidence="1">Catalyzes the NADPH-dependent reduction of glutamyl-tRNA(Glu) to glutamate 1-semialdehyde (GSA).</text>
</comment>
<comment type="catalytic activity">
    <reaction evidence="1">
        <text>(S)-4-amino-5-oxopentanoate + tRNA(Glu) + NADP(+) = L-glutamyl-tRNA(Glu) + NADPH + H(+)</text>
        <dbReference type="Rhea" id="RHEA:12344"/>
        <dbReference type="Rhea" id="RHEA-COMP:9663"/>
        <dbReference type="Rhea" id="RHEA-COMP:9680"/>
        <dbReference type="ChEBI" id="CHEBI:15378"/>
        <dbReference type="ChEBI" id="CHEBI:57501"/>
        <dbReference type="ChEBI" id="CHEBI:57783"/>
        <dbReference type="ChEBI" id="CHEBI:58349"/>
        <dbReference type="ChEBI" id="CHEBI:78442"/>
        <dbReference type="ChEBI" id="CHEBI:78520"/>
        <dbReference type="EC" id="1.2.1.70"/>
    </reaction>
</comment>
<comment type="pathway">
    <text evidence="1">Porphyrin-containing compound metabolism; protoporphyrin-IX biosynthesis; 5-aminolevulinate from L-glutamyl-tRNA(Glu): step 1/2.</text>
</comment>
<comment type="subunit">
    <text evidence="1">Homodimer.</text>
</comment>
<comment type="domain">
    <text evidence="1">Possesses an unusual extended V-shaped dimeric structure with each monomer consisting of three distinct domains arranged along a curved 'spinal' alpha-helix. The N-terminal catalytic domain specifically recognizes the glutamate moiety of the substrate. The second domain is the NADPH-binding domain, and the third C-terminal domain is responsible for dimerization.</text>
</comment>
<comment type="miscellaneous">
    <text evidence="1">During catalysis, the active site Cys acts as a nucleophile attacking the alpha-carbonyl group of tRNA-bound glutamate with the formation of a thioester intermediate between enzyme and glutamate, and the concomitant release of tRNA(Glu). The thioester intermediate is finally reduced by direct hydride transfer from NADPH, to form the product GSA.</text>
</comment>
<comment type="similarity">
    <text evidence="1">Belongs to the glutamyl-tRNA reductase family.</text>
</comment>
<name>HEM1_SHEB8</name>
<feature type="chain" id="PRO_1000004687" description="Glutamyl-tRNA reductase">
    <location>
        <begin position="1"/>
        <end position="416"/>
    </location>
</feature>
<feature type="active site" description="Nucleophile" evidence="1">
    <location>
        <position position="50"/>
    </location>
</feature>
<feature type="binding site" evidence="1">
    <location>
        <begin position="49"/>
        <end position="52"/>
    </location>
    <ligand>
        <name>substrate</name>
    </ligand>
</feature>
<feature type="binding site" evidence="1">
    <location>
        <position position="105"/>
    </location>
    <ligand>
        <name>substrate</name>
    </ligand>
</feature>
<feature type="binding site" evidence="1">
    <location>
        <begin position="110"/>
        <end position="112"/>
    </location>
    <ligand>
        <name>substrate</name>
    </ligand>
</feature>
<feature type="binding site" evidence="1">
    <location>
        <position position="116"/>
    </location>
    <ligand>
        <name>substrate</name>
    </ligand>
</feature>
<feature type="binding site" evidence="1">
    <location>
        <begin position="185"/>
        <end position="190"/>
    </location>
    <ligand>
        <name>NADP(+)</name>
        <dbReference type="ChEBI" id="CHEBI:58349"/>
    </ligand>
</feature>
<feature type="site" description="Important for activity" evidence="1">
    <location>
        <position position="95"/>
    </location>
</feature>
<reference key="1">
    <citation type="submission" date="2007-07" db="EMBL/GenBank/DDBJ databases">
        <title>Complete sequence of chromosome of Shewanella baltica OS185.</title>
        <authorList>
            <consortium name="US DOE Joint Genome Institute"/>
            <person name="Copeland A."/>
            <person name="Lucas S."/>
            <person name="Lapidus A."/>
            <person name="Barry K."/>
            <person name="Glavina del Rio T."/>
            <person name="Dalin E."/>
            <person name="Tice H."/>
            <person name="Pitluck S."/>
            <person name="Sims D."/>
            <person name="Brettin T."/>
            <person name="Bruce D."/>
            <person name="Detter J.C."/>
            <person name="Han C."/>
            <person name="Schmutz J."/>
            <person name="Larimer F."/>
            <person name="Land M."/>
            <person name="Hauser L."/>
            <person name="Kyrpides N."/>
            <person name="Mikhailova N."/>
            <person name="Brettar I."/>
            <person name="Rodrigues J."/>
            <person name="Konstantinidis K."/>
            <person name="Tiedje J."/>
            <person name="Richardson P."/>
        </authorList>
    </citation>
    <scope>NUCLEOTIDE SEQUENCE [LARGE SCALE GENOMIC DNA]</scope>
    <source>
        <strain>OS185</strain>
    </source>
</reference>
<evidence type="ECO:0000255" key="1">
    <source>
        <dbReference type="HAMAP-Rule" id="MF_00087"/>
    </source>
</evidence>